<proteinExistence type="evidence at protein level"/>
<feature type="signal peptide" evidence="4">
    <location>
        <begin position="1"/>
        <end position="25"/>
    </location>
</feature>
<feature type="chain" id="PRO_0000008634" description="Fatty acyl-CoA hydrolase precursor, medium chain">
    <location>
        <begin position="26"/>
        <end position="557"/>
    </location>
</feature>
<feature type="active site" description="Acyl-ester intermediate" evidence="3">
    <location>
        <position position="227"/>
    </location>
</feature>
<feature type="active site" description="Charge relay system" evidence="1">
    <location>
        <position position="345"/>
    </location>
</feature>
<feature type="active site" description="Charge relay system" evidence="1">
    <location>
        <position position="460"/>
    </location>
</feature>
<feature type="glycosylation site" description="N-linked (GlcNAc...) asparagine" evidence="2">
    <location>
        <position position="476"/>
    </location>
</feature>
<feature type="disulfide bond" evidence="1">
    <location>
        <begin position="93"/>
        <end position="122"/>
    </location>
</feature>
<reference key="1">
    <citation type="journal article" date="1993" name="J. Biol. Chem.">
        <title>Molecular cloning and sequencing of thioesterase B cDNA and stimulation of expression of the thioesterase B gene associated with hormonal induction of peroxisome proliferation.</title>
        <authorList>
            <person name="Hwang C.-S."/>
            <person name="Kolattukudy P.E."/>
        </authorList>
    </citation>
    <scope>NUCLEOTIDE SEQUENCE [MRNA]</scope>
    <scope>PROTEIN SEQUENCE OF 26-65</scope>
    <source>
        <tissue>Uropygial gland</tissue>
    </source>
</reference>
<organism>
    <name type="scientific">Anas platyrhynchos</name>
    <name type="common">Mallard</name>
    <name type="synonym">Anas boschas</name>
    <dbReference type="NCBI Taxonomy" id="8839"/>
    <lineage>
        <taxon>Eukaryota</taxon>
        <taxon>Metazoa</taxon>
        <taxon>Chordata</taxon>
        <taxon>Craniata</taxon>
        <taxon>Vertebrata</taxon>
        <taxon>Euteleostomi</taxon>
        <taxon>Archelosauria</taxon>
        <taxon>Archosauria</taxon>
        <taxon>Dinosauria</taxon>
        <taxon>Saurischia</taxon>
        <taxon>Theropoda</taxon>
        <taxon>Coelurosauria</taxon>
        <taxon>Aves</taxon>
        <taxon>Neognathae</taxon>
        <taxon>Galloanserae</taxon>
        <taxon>Anseriformes</taxon>
        <taxon>Anatidae</taxon>
        <taxon>Anatinae</taxon>
        <taxon>Anas</taxon>
    </lineage>
</organism>
<evidence type="ECO:0000250" key="1"/>
<evidence type="ECO:0000255" key="2"/>
<evidence type="ECO:0000255" key="3">
    <source>
        <dbReference type="PROSITE-ProRule" id="PRU10039"/>
    </source>
</evidence>
<evidence type="ECO:0000269" key="4">
    <source>
    </source>
</evidence>
<evidence type="ECO:0000305" key="5"/>
<sequence length="557" mass="61637">MATEKNTLLSLILTAGITALVATGQKAEQPEVVTNYGSVRGYQVKVNAAERSVNVFLGLPFAKPPVGPLRFSEPQPPEPWKGVRDAASYPPMCLQDKVLGQYLSDAITNRKEKVRLQISEDCLYLNVYTPVSTEEQEKLPVFVWIHGGGLVSGAASSYDGSALAAFDNVVVVTIQYRLGIAGYFSTGDKHARGNWGYLDQVAALQWIQENIIHFRGDPGSVTIFGESAGGVSVSALVLSPLAKGLFHKAISESGTAVRILFTEQPEEQAQRIAAAAGCEKSSSAALVECLREKTEAEMEQITLKMPPMFISASLDGVFFPKSPRQLLSEKVINAVPYIIGVNNCEFGWILPRMMKFPEFTEGLEKDVARQVLQSTLALSFKGAPSDIVDLVYNEYIGVAENRAQVRDGLLDSIADPLFVFSAVEVARHHRDAGNPVYFYEFQHRPSSAAGVVPEFVKADHADEIAFVFGKPFLAGNATEEEAKLSRTVMKYWTNFARNGNPNGEGLVHWPQYDMDERYLEIDLTQKAAKKLKERKMEFWMQLTEQIMSDRRRKHTDL</sequence>
<accession>Q04791</accession>
<comment type="function">
    <text>Fatty acid biosynthesis chain termination and release of the free fatty acid product is achieved by hydrolysis of the thio ester by a thioesterase. This thioesterase may be associated with peroxisome proliferation and may play a role in the production of 3-hydroxy fatty acid diester pheromones.</text>
</comment>
<comment type="tissue specificity">
    <text>Highest levels in uropygial gland, much lower in liver and kidney.</text>
</comment>
<comment type="similarity">
    <text evidence="5">Belongs to the type-B carboxylesterase/lipase family.</text>
</comment>
<name>SASB_ANAPL</name>
<keyword id="KW-0903">Direct protein sequencing</keyword>
<keyword id="KW-1015">Disulfide bond</keyword>
<keyword id="KW-0275">Fatty acid biosynthesis</keyword>
<keyword id="KW-0276">Fatty acid metabolism</keyword>
<keyword id="KW-0325">Glycoprotein</keyword>
<keyword id="KW-0378">Hydrolase</keyword>
<keyword id="KW-0444">Lipid biosynthesis</keyword>
<keyword id="KW-0443">Lipid metabolism</keyword>
<keyword id="KW-0732">Signal</keyword>
<dbReference type="EC" id="3.1.2.-"/>
<dbReference type="EMBL" id="L05493">
    <property type="protein sequence ID" value="AAA49223.1"/>
    <property type="molecule type" value="mRNA"/>
</dbReference>
<dbReference type="PIR" id="A47162">
    <property type="entry name" value="A47162"/>
</dbReference>
<dbReference type="RefSeq" id="NP_001297334.1">
    <property type="nucleotide sequence ID" value="NM_001310405.1"/>
</dbReference>
<dbReference type="SMR" id="Q04791"/>
<dbReference type="ESTHER" id="anapl-thioe">
    <property type="family name" value="Carb_B_Chordata"/>
</dbReference>
<dbReference type="MEROPS" id="S09.962"/>
<dbReference type="GeneID" id="101790670"/>
<dbReference type="KEGG" id="apla:101790670"/>
<dbReference type="OrthoDB" id="9103507at2759"/>
<dbReference type="Proteomes" id="UP000694400">
    <property type="component" value="Unplaced"/>
</dbReference>
<dbReference type="GO" id="GO:0016787">
    <property type="term" value="F:hydrolase activity"/>
    <property type="evidence" value="ECO:0007669"/>
    <property type="project" value="UniProtKB-KW"/>
</dbReference>
<dbReference type="GO" id="GO:0006633">
    <property type="term" value="P:fatty acid biosynthetic process"/>
    <property type="evidence" value="ECO:0007669"/>
    <property type="project" value="UniProtKB-KW"/>
</dbReference>
<dbReference type="CDD" id="cd00312">
    <property type="entry name" value="Esterase_lipase"/>
    <property type="match status" value="1"/>
</dbReference>
<dbReference type="FunFam" id="3.40.50.1820:FF:000011">
    <property type="entry name" value="Carboxylic ester hydrolase"/>
    <property type="match status" value="1"/>
</dbReference>
<dbReference type="Gene3D" id="3.40.50.1820">
    <property type="entry name" value="alpha/beta hydrolase"/>
    <property type="match status" value="1"/>
</dbReference>
<dbReference type="InterPro" id="IPR029058">
    <property type="entry name" value="AB_hydrolase_fold"/>
</dbReference>
<dbReference type="InterPro" id="IPR002018">
    <property type="entry name" value="CarbesteraseB"/>
</dbReference>
<dbReference type="InterPro" id="IPR019826">
    <property type="entry name" value="Carboxylesterase_B_AS"/>
</dbReference>
<dbReference type="InterPro" id="IPR019819">
    <property type="entry name" value="Carboxylesterase_B_CS"/>
</dbReference>
<dbReference type="InterPro" id="IPR050309">
    <property type="entry name" value="Type-B_Carboxylest/Lipase"/>
</dbReference>
<dbReference type="PANTHER" id="PTHR11559">
    <property type="entry name" value="CARBOXYLESTERASE"/>
    <property type="match status" value="1"/>
</dbReference>
<dbReference type="Pfam" id="PF00135">
    <property type="entry name" value="COesterase"/>
    <property type="match status" value="1"/>
</dbReference>
<dbReference type="SUPFAM" id="SSF53474">
    <property type="entry name" value="alpha/beta-Hydrolases"/>
    <property type="match status" value="1"/>
</dbReference>
<dbReference type="PROSITE" id="PS00122">
    <property type="entry name" value="CARBOXYLESTERASE_B_1"/>
    <property type="match status" value="1"/>
</dbReference>
<dbReference type="PROSITE" id="PS00941">
    <property type="entry name" value="CARBOXYLESTERASE_B_2"/>
    <property type="match status" value="1"/>
</dbReference>
<protein>
    <recommendedName>
        <fullName>Fatty acyl-CoA hydrolase precursor, medium chain</fullName>
        <ecNumber>3.1.2.-</ecNumber>
    </recommendedName>
    <alternativeName>
        <fullName>Thioesterase B</fullName>
    </alternativeName>
</protein>